<sequence length="151" mass="17033">MTTNTHTLQIEEILELLPHRFPFLLVDRVLDFEEGRFLRAVKNVSVNEPFFQGHFPGKPIFPGVLILEAMAQATGILAFKSVGKLEPGELYYFAGIDEARFKRPVVPGDQMIMEVTFEKTRRGLTRFKGVALVDGKVVCEATMMCARSREA</sequence>
<comment type="function">
    <text evidence="1">Involved in unsaturated fatty acids biosynthesis. Catalyzes the dehydration of short chain beta-hydroxyacyl-ACPs and long chain saturated and unsaturated beta-hydroxyacyl-ACPs.</text>
</comment>
<comment type="catalytic activity">
    <reaction evidence="1">
        <text>a (3R)-hydroxyacyl-[ACP] = a (2E)-enoyl-[ACP] + H2O</text>
        <dbReference type="Rhea" id="RHEA:13097"/>
        <dbReference type="Rhea" id="RHEA-COMP:9925"/>
        <dbReference type="Rhea" id="RHEA-COMP:9945"/>
        <dbReference type="ChEBI" id="CHEBI:15377"/>
        <dbReference type="ChEBI" id="CHEBI:78784"/>
        <dbReference type="ChEBI" id="CHEBI:78827"/>
        <dbReference type="EC" id="4.2.1.59"/>
    </reaction>
</comment>
<comment type="subunit">
    <text evidence="1">Oligomer.</text>
</comment>
<comment type="subcellular location">
    <subcellularLocation>
        <location evidence="1">Cytoplasm</location>
    </subcellularLocation>
</comment>
<comment type="PTM">
    <text evidence="1">The N-terminus is blocked.</text>
</comment>
<comment type="similarity">
    <text evidence="1">Belongs to the thioester dehydratase family. FabZ subfamily.</text>
</comment>
<reference key="1">
    <citation type="journal article" date="2005" name="Nucleic Acids Res.">
        <title>Genome dynamics and diversity of Shigella species, the etiologic agents of bacillary dysentery.</title>
        <authorList>
            <person name="Yang F."/>
            <person name="Yang J."/>
            <person name="Zhang X."/>
            <person name="Chen L."/>
            <person name="Jiang Y."/>
            <person name="Yan Y."/>
            <person name="Tang X."/>
            <person name="Wang J."/>
            <person name="Xiong Z."/>
            <person name="Dong J."/>
            <person name="Xue Y."/>
            <person name="Zhu Y."/>
            <person name="Xu X."/>
            <person name="Sun L."/>
            <person name="Chen S."/>
            <person name="Nie H."/>
            <person name="Peng J."/>
            <person name="Xu J."/>
            <person name="Wang Y."/>
            <person name="Yuan Z."/>
            <person name="Wen Y."/>
            <person name="Yao Z."/>
            <person name="Shen Y."/>
            <person name="Qiang B."/>
            <person name="Hou Y."/>
            <person name="Yu J."/>
            <person name="Jin Q."/>
        </authorList>
    </citation>
    <scope>NUCLEOTIDE SEQUENCE [LARGE SCALE GENOMIC DNA]</scope>
    <source>
        <strain>Sd197</strain>
    </source>
</reference>
<accession>Q32JS9</accession>
<evidence type="ECO:0000255" key="1">
    <source>
        <dbReference type="HAMAP-Rule" id="MF_00406"/>
    </source>
</evidence>
<name>FABZ_SHIDS</name>
<organism>
    <name type="scientific">Shigella dysenteriae serotype 1 (strain Sd197)</name>
    <dbReference type="NCBI Taxonomy" id="300267"/>
    <lineage>
        <taxon>Bacteria</taxon>
        <taxon>Pseudomonadati</taxon>
        <taxon>Pseudomonadota</taxon>
        <taxon>Gammaproteobacteria</taxon>
        <taxon>Enterobacterales</taxon>
        <taxon>Enterobacteriaceae</taxon>
        <taxon>Shigella</taxon>
    </lineage>
</organism>
<proteinExistence type="inferred from homology"/>
<protein>
    <recommendedName>
        <fullName evidence="1">3-hydroxyacyl-[acyl-carrier-protein] dehydratase FabZ</fullName>
        <ecNumber evidence="1">4.2.1.59</ecNumber>
    </recommendedName>
    <alternativeName>
        <fullName evidence="1">(3R)-hydroxymyristoyl-[acyl-carrier-protein] dehydratase</fullName>
        <shortName evidence="1">(3R)-hydroxymyristoyl-ACP dehydrase</shortName>
    </alternativeName>
    <alternativeName>
        <fullName evidence="1">Beta-hydroxyacyl-ACP dehydratase</fullName>
    </alternativeName>
</protein>
<keyword id="KW-0963">Cytoplasm</keyword>
<keyword id="KW-0441">Lipid A biosynthesis</keyword>
<keyword id="KW-0444">Lipid biosynthesis</keyword>
<keyword id="KW-0443">Lipid metabolism</keyword>
<keyword id="KW-0456">Lyase</keyword>
<keyword id="KW-1185">Reference proteome</keyword>
<feature type="chain" id="PRO_0000230836" description="3-hydroxyacyl-[acyl-carrier-protein] dehydratase FabZ">
    <location>
        <begin position="1"/>
        <end position="151"/>
    </location>
</feature>
<feature type="active site" evidence="1">
    <location>
        <position position="54"/>
    </location>
</feature>
<dbReference type="EC" id="4.2.1.59" evidence="1"/>
<dbReference type="EMBL" id="CP000034">
    <property type="protein sequence ID" value="ABB60428.1"/>
    <property type="molecule type" value="Genomic_DNA"/>
</dbReference>
<dbReference type="RefSeq" id="WP_000210739.1">
    <property type="nucleotide sequence ID" value="NC_007606.1"/>
</dbReference>
<dbReference type="RefSeq" id="YP_401917.1">
    <property type="nucleotide sequence ID" value="NC_007606.1"/>
</dbReference>
<dbReference type="SMR" id="Q32JS9"/>
<dbReference type="STRING" id="300267.SDY_0196"/>
<dbReference type="EnsemblBacteria" id="ABB60428">
    <property type="protein sequence ID" value="ABB60428"/>
    <property type="gene ID" value="SDY_0196"/>
</dbReference>
<dbReference type="GeneID" id="93777245"/>
<dbReference type="KEGG" id="sdy:SDY_0196"/>
<dbReference type="PATRIC" id="fig|300267.13.peg.227"/>
<dbReference type="HOGENOM" id="CLU_078912_1_0_6"/>
<dbReference type="Proteomes" id="UP000002716">
    <property type="component" value="Chromosome"/>
</dbReference>
<dbReference type="GO" id="GO:0005737">
    <property type="term" value="C:cytoplasm"/>
    <property type="evidence" value="ECO:0007669"/>
    <property type="project" value="UniProtKB-SubCell"/>
</dbReference>
<dbReference type="GO" id="GO:0016020">
    <property type="term" value="C:membrane"/>
    <property type="evidence" value="ECO:0007669"/>
    <property type="project" value="GOC"/>
</dbReference>
<dbReference type="GO" id="GO:0019171">
    <property type="term" value="F:(3R)-hydroxyacyl-[acyl-carrier-protein] dehydratase activity"/>
    <property type="evidence" value="ECO:0007669"/>
    <property type="project" value="UniProtKB-EC"/>
</dbReference>
<dbReference type="GO" id="GO:0006633">
    <property type="term" value="P:fatty acid biosynthetic process"/>
    <property type="evidence" value="ECO:0007669"/>
    <property type="project" value="UniProtKB-UniRule"/>
</dbReference>
<dbReference type="GO" id="GO:0009245">
    <property type="term" value="P:lipid A biosynthetic process"/>
    <property type="evidence" value="ECO:0007669"/>
    <property type="project" value="UniProtKB-UniRule"/>
</dbReference>
<dbReference type="CDD" id="cd01288">
    <property type="entry name" value="FabZ"/>
    <property type="match status" value="1"/>
</dbReference>
<dbReference type="FunFam" id="3.10.129.10:FF:000001">
    <property type="entry name" value="3-hydroxyacyl-[acyl-carrier-protein] dehydratase FabZ"/>
    <property type="match status" value="1"/>
</dbReference>
<dbReference type="Gene3D" id="3.10.129.10">
    <property type="entry name" value="Hotdog Thioesterase"/>
    <property type="match status" value="1"/>
</dbReference>
<dbReference type="HAMAP" id="MF_00406">
    <property type="entry name" value="FabZ"/>
    <property type="match status" value="1"/>
</dbReference>
<dbReference type="InterPro" id="IPR013114">
    <property type="entry name" value="FabA_FabZ"/>
</dbReference>
<dbReference type="InterPro" id="IPR010084">
    <property type="entry name" value="FabZ"/>
</dbReference>
<dbReference type="InterPro" id="IPR029069">
    <property type="entry name" value="HotDog_dom_sf"/>
</dbReference>
<dbReference type="NCBIfam" id="TIGR01750">
    <property type="entry name" value="fabZ"/>
    <property type="match status" value="1"/>
</dbReference>
<dbReference type="NCBIfam" id="NF000582">
    <property type="entry name" value="PRK00006.1"/>
    <property type="match status" value="1"/>
</dbReference>
<dbReference type="PANTHER" id="PTHR30272">
    <property type="entry name" value="3-HYDROXYACYL-[ACYL-CARRIER-PROTEIN] DEHYDRATASE"/>
    <property type="match status" value="1"/>
</dbReference>
<dbReference type="PANTHER" id="PTHR30272:SF1">
    <property type="entry name" value="3-HYDROXYACYL-[ACYL-CARRIER-PROTEIN] DEHYDRATASE"/>
    <property type="match status" value="1"/>
</dbReference>
<dbReference type="Pfam" id="PF07977">
    <property type="entry name" value="FabA"/>
    <property type="match status" value="1"/>
</dbReference>
<dbReference type="SUPFAM" id="SSF54637">
    <property type="entry name" value="Thioesterase/thiol ester dehydrase-isomerase"/>
    <property type="match status" value="1"/>
</dbReference>
<gene>
    <name evidence="1" type="primary">fabZ</name>
    <name type="ordered locus">SDY_0196</name>
</gene>